<gene>
    <name type="primary">HRG</name>
</gene>
<accession>P33433</accession>
<comment type="function">
    <text evidence="1">Plasma glycoprotein that binds a number of ligands such as heme, heparin, heparan sulfate, thrombospondin, plasminogen, and divalent metal ions. Inhibits rosette formation. Acts as an adapter protein and implicated in regulating many processes such as immune complex and pathogen clearance, cell adhesion, angiogenesis, coagulation and fibrinolysis. Mediates clearance of necrotic cells through enhancing the phagocytosis of necrotic cells in a heparan sulfate-dependent pathway. This process can be regulated by the presence of certain HRG ligands such as heparin and zinc ions. Binds to IgG subclasses of immunoglobins containing kappa and lambda light chains with different affinities regulating their clearance and inhibiting the formation of insoluble immune complexes. Tethers plasminogen to the cell surface. Binds T-cells and alters the cell morphology. Modulates angiogenesis by blocking the CD6-mediated antiangiongenic effect of thrombospondins, THBS1 and THBS2 (By similarity).</text>
</comment>
<comment type="subunit">
    <text evidence="1">Interacts (via the HRR domain) with TPM1; the interaction appears to contribute to the antiangiogenic properties of the HRR domain. Interacts with THBS1 (via the TSP type I repeats); the interaction blocks the antiangiogenic effect of THBS1 with CD36 (By similarity). Interacts with PLG (via its Kringle domains); the interaction tethers PLG to the cell surface and enhances its activation. Interacts with THBS2; the interaction blocks the antiangiogenic effect of THBS2 with CD36. Interacts with HPSE; the interaction is enhanced at acidic pH, partially inhibits binding of HPSE to cell surface receptors and modulates its enzymatic activity. Interacts (via the HRR domain) with TMP1; the interaction partially mediates the antiangiogenic properties of HRG. Interacts with kappa and lambda light chains of IgG molecules. Interacts with ATP5F1A; the interaction occurs on the surface of T-cells and alters their cell morphology in concert with CONA. Binds IgG molecules containing kappa and lambda light chains and inhibits the formation of insoluble immunoglobulin complexes. Interacts with F12; the interaction, which is enhanced in the presence of zinc ions and inhibited by heparin-binding to HRG, inhibits factor XII autoactivation and contact-initiated coagulation (By similarity).</text>
</comment>
<comment type="subcellular location">
    <subcellularLocation>
        <location evidence="1">Secreted</location>
    </subcellularLocation>
</comment>
<comment type="domain">
    <text evidence="1">The His-rich (HRR) region contains approximately 12 tandem internal repeats of the 5-residue G[H/P][H/P]PH consensus sequence. HRR binds heparan sulfate and possesses antiangiogenic, antibacterial and antifungal properties through binding Candida cells, and preferentially lysing the ergosterol-containing liposomes at low pH. The tandem repeats also bind divalent metal ions and heme (By similarity).</text>
</comment>
<comment type="domain">
    <text evidence="1">The cystatin domains can also bind heparan sulfate. Binding is enhanced in the presence of zinc ions (By similarity).</text>
</comment>
<comment type="PTM">
    <text evidence="4">N-glycosylated.</text>
</comment>
<comment type="PTM">
    <text evidence="1">Proteolytic cleavage produces several HRG fragments which are mostly disulfide-linked and, therefore, not released. On platelet activation, may release a 33 kDa antiangiogenic peptide which encompasses the HRR (By similarity).</text>
</comment>
<sequence length="396" mass="44471">AVNPTGCDAVEPVAVRALDLINKGRDGYLFQLLRVADAHLDKVESIAVYYLVESDCPVLSRKHWDDCELNVTVIGQCKLAGPEDLSVNDFNCTTSSVSSALTNMRARGGEGTSYFLDFSVRNCSSHHFPRHHIFGFCRADLFYDVEASDLETPKDIVTNCEVFHRRFSAVQHHLGRPFHSGEHEHSPAGRPPFKPSGSKDHGHPHESYNFRCPPPLEHKNHSDSPPFQARAPLPFPPPGLRCPHPPFGTKGNHRPPHDHSSDEHHPHGHHPHGHHPHGHHPHGHHPPDNDFYDHGPCDPPPHRPPPRHSKERGPGKGHFRFHWRPTGYIHRLPSLKKGEVLPLPEANFPSFSLPNHNNPLQPEIQAFPQSASESCPGTFNIKFLHISKFFAYTLPK</sequence>
<reference key="1">
    <citation type="journal article" date="1993" name="FEBS Lett.">
        <title>Determination of the disulphide bridge arrangement of bovine histidine-rich glycoprotein.</title>
        <authorList>
            <person name="Soerensen C.B."/>
            <person name="Krogh-Pedersen H."/>
            <person name="Petersen T.E."/>
        </authorList>
    </citation>
    <scope>PROTEIN SEQUENCE</scope>
    <scope>PROTEOLYTIC PROCESSING</scope>
    <scope>GLYCOSYLATION AT ASN-70; ASN-91; ASN-122 AND ASN-220</scope>
    <scope>DISULFIDE BONDS</scope>
</reference>
<name>HRG_BOVIN</name>
<feature type="chain" id="PRO_0000207164" description="Histidine-rich glycoprotein">
    <location>
        <begin position="1"/>
        <end position="396"/>
    </location>
</feature>
<feature type="domain" description="Cystatin 1">
    <location>
        <begin position="1"/>
        <end position="102"/>
    </location>
</feature>
<feature type="domain" description="Cystatin 2">
    <location>
        <begin position="103"/>
        <end position="169"/>
    </location>
</feature>
<feature type="region of interest" description="Disordered" evidence="3">
    <location>
        <begin position="176"/>
        <end position="322"/>
    </location>
</feature>
<feature type="compositionally biased region" description="Basic and acidic residues" evidence="3">
    <location>
        <begin position="197"/>
        <end position="208"/>
    </location>
</feature>
<feature type="compositionally biased region" description="Pro residues" evidence="3">
    <location>
        <begin position="233"/>
        <end position="246"/>
    </location>
</feature>
<feature type="compositionally biased region" description="Basic and acidic residues" evidence="3">
    <location>
        <begin position="255"/>
        <end position="265"/>
    </location>
</feature>
<feature type="compositionally biased region" description="Basic residues" evidence="3">
    <location>
        <begin position="266"/>
        <end position="284"/>
    </location>
</feature>
<feature type="compositionally biased region" description="Basic and acidic residues" evidence="3">
    <location>
        <begin position="285"/>
        <end position="296"/>
    </location>
</feature>
<feature type="compositionally biased region" description="Basic residues" evidence="3">
    <location>
        <begin position="304"/>
        <end position="322"/>
    </location>
</feature>
<feature type="site" description="Cleavage">
    <location>
        <begin position="230"/>
        <end position="231"/>
    </location>
</feature>
<feature type="modified residue" description="Phosphoserine" evidence="2">
    <location>
        <position position="309"/>
    </location>
</feature>
<feature type="glycosylation site" description="N-linked (GlcNAc...) asparagine; partial" evidence="4">
    <location>
        <position position="70"/>
    </location>
</feature>
<feature type="glycosylation site" description="N-linked (GlcNAc...) asparagine" evidence="4">
    <location>
        <position position="91"/>
    </location>
</feature>
<feature type="glycosylation site" description="N-linked (GlcNAc...) asparagine" evidence="4">
    <location>
        <position position="122"/>
    </location>
</feature>
<feature type="glycosylation site" description="N-linked (GlcNAc...) asparagine" evidence="4">
    <location>
        <position position="220"/>
    </location>
</feature>
<feature type="disulfide bond" evidence="4">
    <location>
        <begin position="7"/>
        <end position="375"/>
    </location>
</feature>
<feature type="disulfide bond" evidence="4">
    <location>
        <begin position="56"/>
        <end position="67"/>
    </location>
</feature>
<feature type="disulfide bond" evidence="4">
    <location>
        <begin position="77"/>
        <end position="92"/>
    </location>
</feature>
<feature type="disulfide bond" evidence="4">
    <location>
        <begin position="123"/>
        <end position="297"/>
    </location>
</feature>
<feature type="disulfide bond" evidence="4">
    <location>
        <begin position="137"/>
        <end position="160"/>
    </location>
</feature>
<feature type="disulfide bond" evidence="4">
    <location>
        <begin position="212"/>
        <end position="242"/>
    </location>
</feature>
<feature type="sequence variant">
    <original>S</original>
    <variation>R</variation>
    <location>
        <position position="86"/>
    </location>
</feature>
<feature type="sequence variant">
    <original>S</original>
    <variation>Q</variation>
    <location>
        <position position="309"/>
    </location>
</feature>
<feature type="sequence variant">
    <original>H</original>
    <variation>Y</variation>
    <location>
        <position position="322"/>
    </location>
</feature>
<feature type="non-consecutive residues" evidence="5">
    <location>
        <begin position="52"/>
        <end position="53"/>
    </location>
</feature>
<feature type="non-consecutive residues" evidence="5">
    <location>
        <begin position="71"/>
        <end position="72"/>
    </location>
</feature>
<feature type="non-consecutive residues" evidence="5">
    <location>
        <begin position="78"/>
        <end position="79"/>
    </location>
</feature>
<feature type="non-consecutive residues" evidence="5">
    <location>
        <begin position="103"/>
        <end position="104"/>
    </location>
</feature>
<feature type="non-consecutive residues" evidence="5">
    <location>
        <begin position="163"/>
        <end position="164"/>
    </location>
</feature>
<feature type="non-consecutive residues" evidence="5">
    <location>
        <begin position="263"/>
        <end position="264"/>
    </location>
</feature>
<feature type="non-consecutive residues" evidence="5">
    <location>
        <begin position="303"/>
        <end position="304"/>
    </location>
</feature>
<dbReference type="SMR" id="P33433"/>
<dbReference type="FunCoup" id="P33433">
    <property type="interactions" value="149"/>
</dbReference>
<dbReference type="GlyCosmos" id="P33433">
    <property type="glycosylation" value="4 sites, No reported glycans"/>
</dbReference>
<dbReference type="GlyGen" id="P33433">
    <property type="glycosylation" value="4 sites"/>
</dbReference>
<dbReference type="iPTMnet" id="P33433"/>
<dbReference type="PeptideAtlas" id="P33433"/>
<dbReference type="eggNOG" id="ENOG502S50D">
    <property type="taxonomic scope" value="Eukaryota"/>
</dbReference>
<dbReference type="InParanoid" id="P33433"/>
<dbReference type="OrthoDB" id="9941887at2759"/>
<dbReference type="Proteomes" id="UP000009136">
    <property type="component" value="Unplaced"/>
</dbReference>
<dbReference type="GO" id="GO:0005576">
    <property type="term" value="C:extracellular region"/>
    <property type="evidence" value="ECO:0000318"/>
    <property type="project" value="GO_Central"/>
</dbReference>
<dbReference type="GO" id="GO:0020037">
    <property type="term" value="F:heme binding"/>
    <property type="evidence" value="ECO:0000250"/>
    <property type="project" value="UniProtKB"/>
</dbReference>
<dbReference type="GO" id="GO:0043395">
    <property type="term" value="F:heparan sulfate proteoglycan binding"/>
    <property type="evidence" value="ECO:0000250"/>
    <property type="project" value="UniProtKB"/>
</dbReference>
<dbReference type="GO" id="GO:0008201">
    <property type="term" value="F:heparin binding"/>
    <property type="evidence" value="ECO:0000250"/>
    <property type="project" value="UniProtKB"/>
</dbReference>
<dbReference type="GO" id="GO:0019865">
    <property type="term" value="F:immunoglobulin binding"/>
    <property type="evidence" value="ECO:0000250"/>
    <property type="project" value="UniProtKB"/>
</dbReference>
<dbReference type="GO" id="GO:0046872">
    <property type="term" value="F:metal ion binding"/>
    <property type="evidence" value="ECO:0000250"/>
    <property type="project" value="UniProtKB"/>
</dbReference>
<dbReference type="GO" id="GO:0004867">
    <property type="term" value="F:serine-type endopeptidase inhibitor activity"/>
    <property type="evidence" value="ECO:0000318"/>
    <property type="project" value="GO_Central"/>
</dbReference>
<dbReference type="GO" id="GO:0005102">
    <property type="term" value="F:signaling receptor binding"/>
    <property type="evidence" value="ECO:0000250"/>
    <property type="project" value="UniProtKB"/>
</dbReference>
<dbReference type="GO" id="GO:0008270">
    <property type="term" value="F:zinc ion binding"/>
    <property type="evidence" value="ECO:0000250"/>
    <property type="project" value="UniProtKB"/>
</dbReference>
<dbReference type="GO" id="GO:0061844">
    <property type="term" value="P:antimicrobial humoral immune response mediated by antimicrobial peptide"/>
    <property type="evidence" value="ECO:0000318"/>
    <property type="project" value="GO_Central"/>
</dbReference>
<dbReference type="GO" id="GO:0050832">
    <property type="term" value="P:defense response to fungus"/>
    <property type="evidence" value="ECO:0000250"/>
    <property type="project" value="UniProtKB"/>
</dbReference>
<dbReference type="GO" id="GO:0042730">
    <property type="term" value="P:fibrinolysis"/>
    <property type="evidence" value="ECO:0007669"/>
    <property type="project" value="UniProtKB-KW"/>
</dbReference>
<dbReference type="GO" id="GO:0016525">
    <property type="term" value="P:negative regulation of angiogenesis"/>
    <property type="evidence" value="ECO:0000250"/>
    <property type="project" value="UniProtKB"/>
</dbReference>
<dbReference type="GO" id="GO:0043537">
    <property type="term" value="P:negative regulation of blood vessel endothelial cell migration"/>
    <property type="evidence" value="ECO:0000250"/>
    <property type="project" value="UniProtKB"/>
</dbReference>
<dbReference type="GO" id="GO:0007162">
    <property type="term" value="P:negative regulation of cell adhesion"/>
    <property type="evidence" value="ECO:0000250"/>
    <property type="project" value="UniProtKB"/>
</dbReference>
<dbReference type="GO" id="GO:0033629">
    <property type="term" value="P:negative regulation of cell adhesion mediated by integrin"/>
    <property type="evidence" value="ECO:0000250"/>
    <property type="project" value="UniProtKB"/>
</dbReference>
<dbReference type="GO" id="GO:0030308">
    <property type="term" value="P:negative regulation of cell growth"/>
    <property type="evidence" value="ECO:0000250"/>
    <property type="project" value="UniProtKB"/>
</dbReference>
<dbReference type="GO" id="GO:0008285">
    <property type="term" value="P:negative regulation of cell population proliferation"/>
    <property type="evidence" value="ECO:0000250"/>
    <property type="project" value="UniProtKB"/>
</dbReference>
<dbReference type="GO" id="GO:2001027">
    <property type="term" value="P:negative regulation of endothelial cell chemotaxis"/>
    <property type="evidence" value="ECO:0000250"/>
    <property type="project" value="UniProtKB"/>
</dbReference>
<dbReference type="GO" id="GO:0051918">
    <property type="term" value="P:negative regulation of fibrinolysis"/>
    <property type="evidence" value="ECO:0000318"/>
    <property type="project" value="GO_Central"/>
</dbReference>
<dbReference type="GO" id="GO:0010593">
    <property type="term" value="P:negative regulation of lamellipodium assembly"/>
    <property type="evidence" value="ECO:0000250"/>
    <property type="project" value="UniProtKB"/>
</dbReference>
<dbReference type="GO" id="GO:1900747">
    <property type="term" value="P:negative regulation of vascular endothelial growth factor signaling pathway"/>
    <property type="evidence" value="ECO:0000250"/>
    <property type="project" value="UniProtKB"/>
</dbReference>
<dbReference type="GO" id="GO:0030168">
    <property type="term" value="P:platelet activation"/>
    <property type="evidence" value="ECO:0000250"/>
    <property type="project" value="UniProtKB"/>
</dbReference>
<dbReference type="GO" id="GO:0043065">
    <property type="term" value="P:positive regulation of apoptotic process"/>
    <property type="evidence" value="ECO:0000250"/>
    <property type="project" value="UniProtKB"/>
</dbReference>
<dbReference type="GO" id="GO:2000504">
    <property type="term" value="P:positive regulation of blood vessel remodeling"/>
    <property type="evidence" value="ECO:0000250"/>
    <property type="project" value="UniProtKB"/>
</dbReference>
<dbReference type="GO" id="GO:0051894">
    <property type="term" value="P:positive regulation of focal adhesion assembly"/>
    <property type="evidence" value="ECO:0000250"/>
    <property type="project" value="UniProtKB"/>
</dbReference>
<dbReference type="GO" id="GO:0002839">
    <property type="term" value="P:positive regulation of immune response to tumor cell"/>
    <property type="evidence" value="ECO:0000250"/>
    <property type="project" value="UniProtKB"/>
</dbReference>
<dbReference type="GO" id="GO:0032956">
    <property type="term" value="P:regulation of actin cytoskeleton organization"/>
    <property type="evidence" value="ECO:0000250"/>
    <property type="project" value="UniProtKB"/>
</dbReference>
<dbReference type="GO" id="GO:0030193">
    <property type="term" value="P:regulation of blood coagulation"/>
    <property type="evidence" value="ECO:0000250"/>
    <property type="project" value="UniProtKB"/>
</dbReference>
<dbReference type="GO" id="GO:0010468">
    <property type="term" value="P:regulation of gene expression"/>
    <property type="evidence" value="ECO:0000250"/>
    <property type="project" value="UniProtKB"/>
</dbReference>
<dbReference type="GO" id="GO:0050730">
    <property type="term" value="P:regulation of peptidyl-tyrosine phosphorylation"/>
    <property type="evidence" value="ECO:0000250"/>
    <property type="project" value="UniProtKB"/>
</dbReference>
<dbReference type="GO" id="GO:0010543">
    <property type="term" value="P:regulation of platelet activation"/>
    <property type="evidence" value="ECO:0000250"/>
    <property type="project" value="UniProtKB"/>
</dbReference>
<dbReference type="GO" id="GO:0043254">
    <property type="term" value="P:regulation of protein-containing complex assembly"/>
    <property type="evidence" value="ECO:0000250"/>
    <property type="project" value="UniProtKB"/>
</dbReference>
<dbReference type="Gene3D" id="3.10.450.10">
    <property type="match status" value="1"/>
</dbReference>
<dbReference type="InterPro" id="IPR046350">
    <property type="entry name" value="Cystatin_sf"/>
</dbReference>
<dbReference type="InterPro" id="IPR050735">
    <property type="entry name" value="Kininogen_Fetuin_HRG"/>
</dbReference>
<dbReference type="PANTHER" id="PTHR13814">
    <property type="entry name" value="FETUIN"/>
    <property type="match status" value="1"/>
</dbReference>
<dbReference type="PANTHER" id="PTHR13814:SF3">
    <property type="entry name" value="HISTIDINE-RICH GLYCOPROTEIN"/>
    <property type="match status" value="1"/>
</dbReference>
<dbReference type="SUPFAM" id="SSF54403">
    <property type="entry name" value="Cystatin/monellin"/>
    <property type="match status" value="1"/>
</dbReference>
<evidence type="ECO:0000250" key="1"/>
<evidence type="ECO:0000250" key="2">
    <source>
        <dbReference type="UniProtKB" id="Q99PS8"/>
    </source>
</evidence>
<evidence type="ECO:0000256" key="3">
    <source>
        <dbReference type="SAM" id="MobiDB-lite"/>
    </source>
</evidence>
<evidence type="ECO:0000269" key="4">
    <source>
    </source>
</evidence>
<evidence type="ECO:0000305" key="5"/>
<protein>
    <recommendedName>
        <fullName>Histidine-rich glycoprotein</fullName>
    </recommendedName>
    <alternativeName>
        <fullName>Histidine-proline-rich glycoprotein</fullName>
        <shortName>HPRG</shortName>
    </alternativeName>
</protein>
<organism>
    <name type="scientific">Bos taurus</name>
    <name type="common">Bovine</name>
    <dbReference type="NCBI Taxonomy" id="9913"/>
    <lineage>
        <taxon>Eukaryota</taxon>
        <taxon>Metazoa</taxon>
        <taxon>Chordata</taxon>
        <taxon>Craniata</taxon>
        <taxon>Vertebrata</taxon>
        <taxon>Euteleostomi</taxon>
        <taxon>Mammalia</taxon>
        <taxon>Eutheria</taxon>
        <taxon>Laurasiatheria</taxon>
        <taxon>Artiodactyla</taxon>
        <taxon>Ruminantia</taxon>
        <taxon>Pecora</taxon>
        <taxon>Bovidae</taxon>
        <taxon>Bovinae</taxon>
        <taxon>Bos</taxon>
    </lineage>
</organism>
<keyword id="KW-0094">Blood coagulation</keyword>
<keyword id="KW-0186">Copper</keyword>
<keyword id="KW-0903">Direct protein sequencing</keyword>
<keyword id="KW-1015">Disulfide bond</keyword>
<keyword id="KW-0280">Fibrinolysis</keyword>
<keyword id="KW-0325">Glycoprotein</keyword>
<keyword id="KW-0356">Hemostasis</keyword>
<keyword id="KW-0358">Heparin-binding</keyword>
<keyword id="KW-0597">Phosphoprotein</keyword>
<keyword id="KW-1185">Reference proteome</keyword>
<keyword id="KW-0677">Repeat</keyword>
<keyword id="KW-0964">Secreted</keyword>
<keyword id="KW-0862">Zinc</keyword>
<proteinExistence type="evidence at protein level"/>